<feature type="chain" id="PRO_0000193762" description="AP-1 complex subunit gamma-1">
    <location>
        <begin position="1"/>
        <end position="865"/>
    </location>
</feature>
<feature type="domain" description="GAE" evidence="2">
    <location>
        <begin position="746"/>
        <end position="860"/>
    </location>
</feature>
<feature type="region of interest" description="Disordered" evidence="3">
    <location>
        <begin position="665"/>
        <end position="690"/>
    </location>
</feature>
<feature type="compositionally biased region" description="Polar residues" evidence="3">
    <location>
        <begin position="675"/>
        <end position="690"/>
    </location>
</feature>
<protein>
    <recommendedName>
        <fullName>AP-1 complex subunit gamma-1</fullName>
    </recommendedName>
    <alternativeName>
        <fullName>Clathrin assembly protein complex 1 gamma-1 large chain</fullName>
    </alternativeName>
    <alternativeName>
        <fullName>Clathrin assembly protein large gamma-1 chain</fullName>
    </alternativeName>
    <alternativeName>
        <fullName>Gamma-adaptin</fullName>
    </alternativeName>
</protein>
<sequence>MQTTHPKNLHLTCSGVERGFTNSPKTHPKMSSLKSFIKAVRASKTTAEEHTTILKESAQIRKNIRQGSNDMRMRRKNVAKLLYLFLLGEPTHFGQIECLKLLSSSRFMDKRLGYLAAMLLLDENQEVLTLLTNSLQNDLKSRDKFIVGLALSAFGNVAGPELARDLSNDIAELCSNHHNYISKKAVLCALRVIQKEPDLESLYIEKTDELLHSKSHGVLMAALAFAISACKINPSLISRFESQADDLIYRIRQLSTSTYSSEHNIGNISDPFLQVKILQFLSILGQNNPKIYDKMSDLLAQVCTNTDSSRNAGNAILYQAVRTILDLNSDSSLRVLGVNILAKFLGNRDNNTRYVALNMLKLVVNSEENAVQRHRSTILACLNDVDSSIQSRALELSTFLVNEANVRFMVRELLSFLDNVSDELRGSTAQYITEVTNAFAPNKRWHFDTLLRVFKSAGNFVSESTLSTFLRLIASAPELHEYAVVKLYAALKEDVSQEALTLSAFWVIGEYGQMLLSPTMNFDDDQTLPHSVSESDIVDIIEEVFNSVEASRYIIVQYGLFALTKLSARLGSSSTASRIDKIIYSYKRNKNTEVQQRSVEFHLILNDSKLSKTILEPTPAPLPPPRTTPYQNAEQKLKANKHVEKRVQESNELLDLIGLTTPSVAEPLETPVDEMTQSPQSSLSRAPSTSKKSHFEDILGLFASPAPSAQPVDSLASSFASLDFNASASQPSNNLSLLSSIPSTSKSYPPIVVFDKHDVTLTLVPSKEESTKTAVIEAKFKNKNPMTRVEKIHLEVAVPKSQKLKIQPLRTTSMEPGGETSQTLRVHGPSGSQVKLRLRISVVRQGGSNTLDQVDFGKLPSDLLQ</sequence>
<evidence type="ECO:0000250" key="1"/>
<evidence type="ECO:0000255" key="2">
    <source>
        <dbReference type="PROSITE-ProRule" id="PRU00093"/>
    </source>
</evidence>
<evidence type="ECO:0000256" key="3">
    <source>
        <dbReference type="SAM" id="MobiDB-lite"/>
    </source>
</evidence>
<evidence type="ECO:0000305" key="4"/>
<organism>
    <name type="scientific">Schizosaccharomyces pombe (strain 972 / ATCC 24843)</name>
    <name type="common">Fission yeast</name>
    <dbReference type="NCBI Taxonomy" id="284812"/>
    <lineage>
        <taxon>Eukaryota</taxon>
        <taxon>Fungi</taxon>
        <taxon>Dikarya</taxon>
        <taxon>Ascomycota</taxon>
        <taxon>Taphrinomycotina</taxon>
        <taxon>Schizosaccharomycetes</taxon>
        <taxon>Schizosaccharomycetales</taxon>
        <taxon>Schizosaccharomycetaceae</taxon>
        <taxon>Schizosaccharomyces</taxon>
    </lineage>
</organism>
<keyword id="KW-0968">Cytoplasmic vesicle</keyword>
<keyword id="KW-0333">Golgi apparatus</keyword>
<keyword id="KW-0472">Membrane</keyword>
<keyword id="KW-0653">Protein transport</keyword>
<keyword id="KW-1185">Reference proteome</keyword>
<keyword id="KW-0813">Transport</keyword>
<name>AP1G1_SCHPO</name>
<dbReference type="EMBL" id="CU329672">
    <property type="protein sequence ID" value="CAB54865.1"/>
    <property type="molecule type" value="Genomic_DNA"/>
</dbReference>
<dbReference type="PIR" id="T41685">
    <property type="entry name" value="T41685"/>
</dbReference>
<dbReference type="RefSeq" id="NP_588559.1">
    <property type="nucleotide sequence ID" value="NM_001023546.2"/>
</dbReference>
<dbReference type="SMR" id="Q9UU81"/>
<dbReference type="BioGRID" id="275878">
    <property type="interactions" value="9"/>
</dbReference>
<dbReference type="FunCoup" id="Q9UU81">
    <property type="interactions" value="238"/>
</dbReference>
<dbReference type="STRING" id="284812.Q9UU81"/>
<dbReference type="SwissPalm" id="Q9UU81"/>
<dbReference type="PaxDb" id="4896-SPCP1E11.06.1"/>
<dbReference type="EnsemblFungi" id="SPCP1E11.06.1">
    <property type="protein sequence ID" value="SPCP1E11.06.1:pep"/>
    <property type="gene ID" value="SPCP1E11.06"/>
</dbReference>
<dbReference type="GeneID" id="2539311"/>
<dbReference type="KEGG" id="spo:2539311"/>
<dbReference type="PomBase" id="SPCP1E11.06">
    <property type="gene designation" value="apl4"/>
</dbReference>
<dbReference type="VEuPathDB" id="FungiDB:SPCP1E11.06"/>
<dbReference type="eggNOG" id="KOG1062">
    <property type="taxonomic scope" value="Eukaryota"/>
</dbReference>
<dbReference type="HOGENOM" id="CLU_003824_0_0_1"/>
<dbReference type="InParanoid" id="Q9UU81"/>
<dbReference type="OMA" id="AICAMRI"/>
<dbReference type="PhylomeDB" id="Q9UU81"/>
<dbReference type="Reactome" id="R-SPO-432720">
    <property type="pathway name" value="Lysosome Vesicle Biogenesis"/>
</dbReference>
<dbReference type="PRO" id="PR:Q9UU81"/>
<dbReference type="Proteomes" id="UP000002485">
    <property type="component" value="Chromosome III"/>
</dbReference>
<dbReference type="GO" id="GO:0030121">
    <property type="term" value="C:AP-1 adaptor complex"/>
    <property type="evidence" value="ECO:0000314"/>
    <property type="project" value="PomBase"/>
</dbReference>
<dbReference type="GO" id="GO:0005737">
    <property type="term" value="C:cytoplasm"/>
    <property type="evidence" value="ECO:0007005"/>
    <property type="project" value="PomBase"/>
</dbReference>
<dbReference type="GO" id="GO:0005829">
    <property type="term" value="C:cytosol"/>
    <property type="evidence" value="ECO:0007669"/>
    <property type="project" value="GOC"/>
</dbReference>
<dbReference type="GO" id="GO:0005768">
    <property type="term" value="C:endosome"/>
    <property type="evidence" value="ECO:0000314"/>
    <property type="project" value="PomBase"/>
</dbReference>
<dbReference type="GO" id="GO:0005794">
    <property type="term" value="C:Golgi apparatus"/>
    <property type="evidence" value="ECO:0000314"/>
    <property type="project" value="PomBase"/>
</dbReference>
<dbReference type="GO" id="GO:0035615">
    <property type="term" value="F:clathrin adaptor activity"/>
    <property type="evidence" value="ECO:0000318"/>
    <property type="project" value="GO_Central"/>
</dbReference>
<dbReference type="GO" id="GO:0030276">
    <property type="term" value="F:clathrin binding"/>
    <property type="evidence" value="ECO:0000266"/>
    <property type="project" value="PomBase"/>
</dbReference>
<dbReference type="GO" id="GO:0099638">
    <property type="term" value="P:endosome to plasma membrane protein transport"/>
    <property type="evidence" value="ECO:0000314"/>
    <property type="project" value="PomBase"/>
</dbReference>
<dbReference type="GO" id="GO:0006896">
    <property type="term" value="P:Golgi to vacuole transport"/>
    <property type="evidence" value="ECO:0000318"/>
    <property type="project" value="GO_Central"/>
</dbReference>
<dbReference type="GO" id="GO:0042147">
    <property type="term" value="P:retrograde transport, endosome to Golgi"/>
    <property type="evidence" value="ECO:0000314"/>
    <property type="project" value="PomBase"/>
</dbReference>
<dbReference type="FunFam" id="1.25.10.10:FF:000030">
    <property type="entry name" value="AP-1 complex subunit gamma"/>
    <property type="match status" value="1"/>
</dbReference>
<dbReference type="FunFam" id="2.60.40.1230:FF:000008">
    <property type="entry name" value="AP-1 complex subunit gamma"/>
    <property type="match status" value="1"/>
</dbReference>
<dbReference type="Gene3D" id="2.60.40.1230">
    <property type="match status" value="1"/>
</dbReference>
<dbReference type="Gene3D" id="1.25.10.10">
    <property type="entry name" value="Leucine-rich Repeat Variant"/>
    <property type="match status" value="1"/>
</dbReference>
<dbReference type="InterPro" id="IPR050840">
    <property type="entry name" value="Adaptor_Complx_Large_Subunit"/>
</dbReference>
<dbReference type="InterPro" id="IPR017107">
    <property type="entry name" value="AP1_complex_gsu"/>
</dbReference>
<dbReference type="InterPro" id="IPR011989">
    <property type="entry name" value="ARM-like"/>
</dbReference>
<dbReference type="InterPro" id="IPR016024">
    <property type="entry name" value="ARM-type_fold"/>
</dbReference>
<dbReference type="InterPro" id="IPR002553">
    <property type="entry name" value="Clathrin/coatomer_adapt-like_N"/>
</dbReference>
<dbReference type="InterPro" id="IPR008152">
    <property type="entry name" value="Clathrin_a/b/g-adaptin_app_Ig"/>
</dbReference>
<dbReference type="InterPro" id="IPR013041">
    <property type="entry name" value="Clathrin_app_Ig-like_sf"/>
</dbReference>
<dbReference type="InterPro" id="IPR008153">
    <property type="entry name" value="GAE_dom"/>
</dbReference>
<dbReference type="PANTHER" id="PTHR22780">
    <property type="entry name" value="ADAPTIN, ALPHA/GAMMA/EPSILON"/>
    <property type="match status" value="1"/>
</dbReference>
<dbReference type="Pfam" id="PF01602">
    <property type="entry name" value="Adaptin_N"/>
    <property type="match status" value="1"/>
</dbReference>
<dbReference type="Pfam" id="PF02883">
    <property type="entry name" value="Alpha_adaptinC2"/>
    <property type="match status" value="1"/>
</dbReference>
<dbReference type="PIRSF" id="PIRSF037094">
    <property type="entry name" value="AP1_complex_gamma"/>
    <property type="match status" value="1"/>
</dbReference>
<dbReference type="SMART" id="SM00809">
    <property type="entry name" value="Alpha_adaptinC2"/>
    <property type="match status" value="1"/>
</dbReference>
<dbReference type="SUPFAM" id="SSF48371">
    <property type="entry name" value="ARM repeat"/>
    <property type="match status" value="1"/>
</dbReference>
<dbReference type="SUPFAM" id="SSF49348">
    <property type="entry name" value="Clathrin adaptor appendage domain"/>
    <property type="match status" value="1"/>
</dbReference>
<dbReference type="PROSITE" id="PS50180">
    <property type="entry name" value="GAE"/>
    <property type="match status" value="1"/>
</dbReference>
<reference key="1">
    <citation type="journal article" date="2002" name="Nature">
        <title>The genome sequence of Schizosaccharomyces pombe.</title>
        <authorList>
            <person name="Wood V."/>
            <person name="Gwilliam R."/>
            <person name="Rajandream M.A."/>
            <person name="Lyne M.H."/>
            <person name="Lyne R."/>
            <person name="Stewart A."/>
            <person name="Sgouros J.G."/>
            <person name="Peat N."/>
            <person name="Hayles J."/>
            <person name="Baker S.G."/>
            <person name="Basham D."/>
            <person name="Bowman S."/>
            <person name="Brooks K."/>
            <person name="Brown D."/>
            <person name="Brown S."/>
            <person name="Chillingworth T."/>
            <person name="Churcher C.M."/>
            <person name="Collins M."/>
            <person name="Connor R."/>
            <person name="Cronin A."/>
            <person name="Davis P."/>
            <person name="Feltwell T."/>
            <person name="Fraser A."/>
            <person name="Gentles S."/>
            <person name="Goble A."/>
            <person name="Hamlin N."/>
            <person name="Harris D.E."/>
            <person name="Hidalgo J."/>
            <person name="Hodgson G."/>
            <person name="Holroyd S."/>
            <person name="Hornsby T."/>
            <person name="Howarth S."/>
            <person name="Huckle E.J."/>
            <person name="Hunt S."/>
            <person name="Jagels K."/>
            <person name="James K.D."/>
            <person name="Jones L."/>
            <person name="Jones M."/>
            <person name="Leather S."/>
            <person name="McDonald S."/>
            <person name="McLean J."/>
            <person name="Mooney P."/>
            <person name="Moule S."/>
            <person name="Mungall K.L."/>
            <person name="Murphy L.D."/>
            <person name="Niblett D."/>
            <person name="Odell C."/>
            <person name="Oliver K."/>
            <person name="O'Neil S."/>
            <person name="Pearson D."/>
            <person name="Quail M.A."/>
            <person name="Rabbinowitsch E."/>
            <person name="Rutherford K.M."/>
            <person name="Rutter S."/>
            <person name="Saunders D."/>
            <person name="Seeger K."/>
            <person name="Sharp S."/>
            <person name="Skelton J."/>
            <person name="Simmonds M.N."/>
            <person name="Squares R."/>
            <person name="Squares S."/>
            <person name="Stevens K."/>
            <person name="Taylor K."/>
            <person name="Taylor R.G."/>
            <person name="Tivey A."/>
            <person name="Walsh S.V."/>
            <person name="Warren T."/>
            <person name="Whitehead S."/>
            <person name="Woodward J.R."/>
            <person name="Volckaert G."/>
            <person name="Aert R."/>
            <person name="Robben J."/>
            <person name="Grymonprez B."/>
            <person name="Weltjens I."/>
            <person name="Vanstreels E."/>
            <person name="Rieger M."/>
            <person name="Schaefer M."/>
            <person name="Mueller-Auer S."/>
            <person name="Gabel C."/>
            <person name="Fuchs M."/>
            <person name="Duesterhoeft A."/>
            <person name="Fritzc C."/>
            <person name="Holzer E."/>
            <person name="Moestl D."/>
            <person name="Hilbert H."/>
            <person name="Borzym K."/>
            <person name="Langer I."/>
            <person name="Beck A."/>
            <person name="Lehrach H."/>
            <person name="Reinhardt R."/>
            <person name="Pohl T.M."/>
            <person name="Eger P."/>
            <person name="Zimmermann W."/>
            <person name="Wedler H."/>
            <person name="Wambutt R."/>
            <person name="Purnelle B."/>
            <person name="Goffeau A."/>
            <person name="Cadieu E."/>
            <person name="Dreano S."/>
            <person name="Gloux S."/>
            <person name="Lelaure V."/>
            <person name="Mottier S."/>
            <person name="Galibert F."/>
            <person name="Aves S.J."/>
            <person name="Xiang Z."/>
            <person name="Hunt C."/>
            <person name="Moore K."/>
            <person name="Hurst S.M."/>
            <person name="Lucas M."/>
            <person name="Rochet M."/>
            <person name="Gaillardin C."/>
            <person name="Tallada V.A."/>
            <person name="Garzon A."/>
            <person name="Thode G."/>
            <person name="Daga R.R."/>
            <person name="Cruzado L."/>
            <person name="Jimenez J."/>
            <person name="Sanchez M."/>
            <person name="del Rey F."/>
            <person name="Benito J."/>
            <person name="Dominguez A."/>
            <person name="Revuelta J.L."/>
            <person name="Moreno S."/>
            <person name="Armstrong J."/>
            <person name="Forsburg S.L."/>
            <person name="Cerutti L."/>
            <person name="Lowe T."/>
            <person name="McCombie W.R."/>
            <person name="Paulsen I."/>
            <person name="Potashkin J."/>
            <person name="Shpakovski G.V."/>
            <person name="Ussery D."/>
            <person name="Barrell B.G."/>
            <person name="Nurse P."/>
        </authorList>
    </citation>
    <scope>NUCLEOTIDE SEQUENCE [LARGE SCALE GENOMIC DNA]</scope>
    <source>
        <strain>972 / ATCC 24843</strain>
    </source>
</reference>
<accession>Q9UU81</accession>
<gene>
    <name type="primary">apl4</name>
    <name type="ORF">SPCP1E11.06</name>
</gene>
<proteinExistence type="inferred from homology"/>
<comment type="function">
    <text evidence="1">Adaptins are components of the adaptor complexes which link clathrin to receptors in coated vesicles. Clathrin-associated protein complexes are believed to interact with the cytoplasmic tails of membrane proteins, leading to their selection and concentration. The AP-1 complex interacts directly with clathrin (By similarity).</text>
</comment>
<comment type="subunit">
    <text evidence="1">Adaptor protein complex 1 (AP-1) is a heterotetramer composed of two large adaptins (gamma-type subunit apl4 and beta-type subunit apl2), a medium adaptin (mu-type subunit apm1) and a small adaptin (sigma-type subunit aps1). AP-1 interacts with clathrin (By similarity).</text>
</comment>
<comment type="subcellular location">
    <subcellularLocation>
        <location evidence="1">Cytoplasmic vesicle</location>
        <location evidence="1">Clathrin-coated vesicle membrane</location>
        <topology evidence="1">Peripheral membrane protein</topology>
        <orientation evidence="1">Cytoplasmic side</orientation>
    </subcellularLocation>
    <subcellularLocation>
        <location evidence="1">Golgi apparatus</location>
    </subcellularLocation>
    <text evidence="1">Component of the coat surrounding the cytoplasmic face of coated vesicles located at the Golgi complex.</text>
</comment>
<comment type="similarity">
    <text evidence="4">Belongs to the adaptor complexes large subunit family.</text>
</comment>